<organism>
    <name type="scientific">Geotalea uraniireducens (strain Rf4)</name>
    <name type="common">Geobacter uraniireducens</name>
    <dbReference type="NCBI Taxonomy" id="351605"/>
    <lineage>
        <taxon>Bacteria</taxon>
        <taxon>Pseudomonadati</taxon>
        <taxon>Thermodesulfobacteriota</taxon>
        <taxon>Desulfuromonadia</taxon>
        <taxon>Geobacterales</taxon>
        <taxon>Geobacteraceae</taxon>
        <taxon>Geotalea</taxon>
    </lineage>
</organism>
<gene>
    <name type="primary">pyrD</name>
    <name type="ordered locus">Gura_2150</name>
</gene>
<sequence>MGKPDLSVEVAGIKLRNPVMTASGTFGYGKEFADYLDLEKIGAIITKGLSIRPKAGNPTPRIVETPGGMLNAIGLQNVGIDAFIQEKLPFLRTVNTPVIVNLYGNTLEEYGELAEKLDKLPEVAGLEVNISCPNVKQGGIVFGTDPNAAYEVVSLVRESTIKPLIVKLSPNVTNVVEMANACVDAGADALSLINTLTGMAIDLQKRRPILANMTGGLSGPAIKPVALRMVWQVAQAVKVPVIGIGGIMTATDALEFMLAGATAVQVGTANFLDPSAAQTIAEGMETYLEENGIADVKELIGALIT</sequence>
<feature type="chain" id="PRO_0000336446" description="Dihydroorotate dehydrogenase B (NAD(+)), catalytic subunit">
    <location>
        <begin position="1"/>
        <end position="305"/>
    </location>
</feature>
<feature type="active site" description="Nucleophile">
    <location>
        <position position="132"/>
    </location>
</feature>
<feature type="binding site" evidence="1">
    <location>
        <position position="23"/>
    </location>
    <ligand>
        <name>FMN</name>
        <dbReference type="ChEBI" id="CHEBI:58210"/>
    </ligand>
</feature>
<feature type="binding site" evidence="1">
    <location>
        <begin position="47"/>
        <end position="48"/>
    </location>
    <ligand>
        <name>FMN</name>
        <dbReference type="ChEBI" id="CHEBI:58210"/>
    </ligand>
</feature>
<feature type="binding site" evidence="1">
    <location>
        <position position="47"/>
    </location>
    <ligand>
        <name>substrate</name>
    </ligand>
</feature>
<feature type="binding site" evidence="1">
    <location>
        <begin position="71"/>
        <end position="75"/>
    </location>
    <ligand>
        <name>substrate</name>
    </ligand>
</feature>
<feature type="binding site" evidence="1">
    <location>
        <position position="101"/>
    </location>
    <ligand>
        <name>FMN</name>
        <dbReference type="ChEBI" id="CHEBI:58210"/>
    </ligand>
</feature>
<feature type="binding site" evidence="1">
    <location>
        <position position="129"/>
    </location>
    <ligand>
        <name>FMN</name>
        <dbReference type="ChEBI" id="CHEBI:58210"/>
    </ligand>
</feature>
<feature type="binding site" evidence="1">
    <location>
        <position position="129"/>
    </location>
    <ligand>
        <name>substrate</name>
    </ligand>
</feature>
<feature type="binding site" evidence="1">
    <location>
        <position position="167"/>
    </location>
    <ligand>
        <name>FMN</name>
        <dbReference type="ChEBI" id="CHEBI:58210"/>
    </ligand>
</feature>
<feature type="binding site" evidence="1">
    <location>
        <position position="193"/>
    </location>
    <ligand>
        <name>FMN</name>
        <dbReference type="ChEBI" id="CHEBI:58210"/>
    </ligand>
</feature>
<feature type="binding site" evidence="1">
    <location>
        <begin position="194"/>
        <end position="195"/>
    </location>
    <ligand>
        <name>substrate</name>
    </ligand>
</feature>
<feature type="binding site" evidence="1">
    <location>
        <position position="219"/>
    </location>
    <ligand>
        <name>FMN</name>
        <dbReference type="ChEBI" id="CHEBI:58210"/>
    </ligand>
</feature>
<feature type="binding site" evidence="1">
    <location>
        <begin position="245"/>
        <end position="246"/>
    </location>
    <ligand>
        <name>FMN</name>
        <dbReference type="ChEBI" id="CHEBI:58210"/>
    </ligand>
</feature>
<feature type="binding site" evidence="1">
    <location>
        <begin position="267"/>
        <end position="268"/>
    </location>
    <ligand>
        <name>FMN</name>
        <dbReference type="ChEBI" id="CHEBI:58210"/>
    </ligand>
</feature>
<name>PYRDB_GEOUR</name>
<reference key="1">
    <citation type="submission" date="2007-05" db="EMBL/GenBank/DDBJ databases">
        <title>Complete sequence of Geobacter uraniireducens Rf4.</title>
        <authorList>
            <consortium name="US DOE Joint Genome Institute"/>
            <person name="Copeland A."/>
            <person name="Lucas S."/>
            <person name="Lapidus A."/>
            <person name="Barry K."/>
            <person name="Detter J.C."/>
            <person name="Glavina del Rio T."/>
            <person name="Hammon N."/>
            <person name="Israni S."/>
            <person name="Dalin E."/>
            <person name="Tice H."/>
            <person name="Pitluck S."/>
            <person name="Chertkov O."/>
            <person name="Brettin T."/>
            <person name="Bruce D."/>
            <person name="Han C."/>
            <person name="Schmutz J."/>
            <person name="Larimer F."/>
            <person name="Land M."/>
            <person name="Hauser L."/>
            <person name="Kyrpides N."/>
            <person name="Mikhailova N."/>
            <person name="Shelobolina E."/>
            <person name="Aklujkar M."/>
            <person name="Lovley D."/>
            <person name="Richardson P."/>
        </authorList>
    </citation>
    <scope>NUCLEOTIDE SEQUENCE [LARGE SCALE GENOMIC DNA]</scope>
    <source>
        <strain>ATCC BAA-1134 / JCM 13001 / Rf4</strain>
    </source>
</reference>
<protein>
    <recommendedName>
        <fullName>Dihydroorotate dehydrogenase B (NAD(+)), catalytic subunit</fullName>
        <shortName>DHOD B</shortName>
        <shortName>DHODase B</shortName>
        <shortName>DHOdehase B</shortName>
        <ecNumber>1.3.1.14</ecNumber>
    </recommendedName>
    <alternativeName>
        <fullName>Dihydroorotate oxidase B</fullName>
    </alternativeName>
    <alternativeName>
        <fullName>Orotate reductase (NADH)</fullName>
    </alternativeName>
</protein>
<evidence type="ECO:0000250" key="1"/>
<evidence type="ECO:0000305" key="2"/>
<proteinExistence type="inferred from homology"/>
<comment type="function">
    <text evidence="1">Catalyzes the conversion of dihydroorotate to orotate with NAD(+) as electron acceptor.</text>
</comment>
<comment type="catalytic activity">
    <reaction>
        <text>(S)-dihydroorotate + NAD(+) = orotate + NADH + H(+)</text>
        <dbReference type="Rhea" id="RHEA:13513"/>
        <dbReference type="ChEBI" id="CHEBI:15378"/>
        <dbReference type="ChEBI" id="CHEBI:30839"/>
        <dbReference type="ChEBI" id="CHEBI:30864"/>
        <dbReference type="ChEBI" id="CHEBI:57540"/>
        <dbReference type="ChEBI" id="CHEBI:57945"/>
        <dbReference type="EC" id="1.3.1.14"/>
    </reaction>
</comment>
<comment type="cofactor">
    <cofactor evidence="1">
        <name>FMN</name>
        <dbReference type="ChEBI" id="CHEBI:58210"/>
    </cofactor>
    <text evidence="1">Binds 1 FMN per subunit.</text>
</comment>
<comment type="pathway">
    <text>Pyrimidine metabolism; UMP biosynthesis via de novo pathway; orotate from (S)-dihydroorotate (NAD(+) route): step 1/1.</text>
</comment>
<comment type="subunit">
    <text evidence="1">Heterotetramer of 2 PyrK and 2 PyrD type B subunits.</text>
</comment>
<comment type="subcellular location">
    <subcellularLocation>
        <location evidence="1">Cytoplasm</location>
    </subcellularLocation>
</comment>
<comment type="similarity">
    <text evidence="2">Belongs to the dihydroorotate dehydrogenase family. Type 1 subfamily.</text>
</comment>
<dbReference type="EC" id="1.3.1.14"/>
<dbReference type="EMBL" id="CP000698">
    <property type="protein sequence ID" value="ABQ26338.1"/>
    <property type="molecule type" value="Genomic_DNA"/>
</dbReference>
<dbReference type="RefSeq" id="WP_011939039.1">
    <property type="nucleotide sequence ID" value="NC_009483.1"/>
</dbReference>
<dbReference type="SMR" id="A5G3H0"/>
<dbReference type="STRING" id="351605.Gura_2150"/>
<dbReference type="KEGG" id="gur:Gura_2150"/>
<dbReference type="HOGENOM" id="CLU_042042_0_0_7"/>
<dbReference type="OrthoDB" id="9802377at2"/>
<dbReference type="UniPathway" id="UPA00070">
    <property type="reaction ID" value="UER00945"/>
</dbReference>
<dbReference type="Proteomes" id="UP000006695">
    <property type="component" value="Chromosome"/>
</dbReference>
<dbReference type="GO" id="GO:0005737">
    <property type="term" value="C:cytoplasm"/>
    <property type="evidence" value="ECO:0007669"/>
    <property type="project" value="UniProtKB-SubCell"/>
</dbReference>
<dbReference type="GO" id="GO:0004589">
    <property type="term" value="F:dihydroorotate dehydrogenase (NAD+) activity"/>
    <property type="evidence" value="ECO:0007669"/>
    <property type="project" value="UniProtKB-EC"/>
</dbReference>
<dbReference type="GO" id="GO:0006207">
    <property type="term" value="P:'de novo' pyrimidine nucleobase biosynthetic process"/>
    <property type="evidence" value="ECO:0007669"/>
    <property type="project" value="InterPro"/>
</dbReference>
<dbReference type="GO" id="GO:0044205">
    <property type="term" value="P:'de novo' UMP biosynthetic process"/>
    <property type="evidence" value="ECO:0007669"/>
    <property type="project" value="UniProtKB-UniRule"/>
</dbReference>
<dbReference type="CDD" id="cd04740">
    <property type="entry name" value="DHOD_1B_like"/>
    <property type="match status" value="1"/>
</dbReference>
<dbReference type="FunFam" id="3.20.20.70:FF:000027">
    <property type="entry name" value="Dihydropyrimidine dehydrogenase [NADP(+)]"/>
    <property type="match status" value="1"/>
</dbReference>
<dbReference type="Gene3D" id="3.20.20.70">
    <property type="entry name" value="Aldolase class I"/>
    <property type="match status" value="1"/>
</dbReference>
<dbReference type="HAMAP" id="MF_00224">
    <property type="entry name" value="DHO_dh_type1"/>
    <property type="match status" value="1"/>
</dbReference>
<dbReference type="InterPro" id="IPR013785">
    <property type="entry name" value="Aldolase_TIM"/>
</dbReference>
<dbReference type="InterPro" id="IPR050074">
    <property type="entry name" value="DHO_dehydrogenase"/>
</dbReference>
<dbReference type="InterPro" id="IPR033888">
    <property type="entry name" value="DHOD_1B"/>
</dbReference>
<dbReference type="InterPro" id="IPR024920">
    <property type="entry name" value="Dihydroorotate_DH_1"/>
</dbReference>
<dbReference type="InterPro" id="IPR012135">
    <property type="entry name" value="Dihydroorotate_DH_1_2"/>
</dbReference>
<dbReference type="InterPro" id="IPR005720">
    <property type="entry name" value="Dihydroorotate_DH_cat"/>
</dbReference>
<dbReference type="InterPro" id="IPR001295">
    <property type="entry name" value="Dihydroorotate_DH_CS"/>
</dbReference>
<dbReference type="InterPro" id="IPR049622">
    <property type="entry name" value="Dihydroorotate_DH_I"/>
</dbReference>
<dbReference type="NCBIfam" id="NF005574">
    <property type="entry name" value="PRK07259.1"/>
    <property type="match status" value="1"/>
</dbReference>
<dbReference type="NCBIfam" id="TIGR01037">
    <property type="entry name" value="pyrD_sub1_fam"/>
    <property type="match status" value="1"/>
</dbReference>
<dbReference type="PANTHER" id="PTHR48109:SF1">
    <property type="entry name" value="DIHYDROOROTATE DEHYDROGENASE (FUMARATE)"/>
    <property type="match status" value="1"/>
</dbReference>
<dbReference type="PANTHER" id="PTHR48109">
    <property type="entry name" value="DIHYDROOROTATE DEHYDROGENASE (QUINONE), MITOCHONDRIAL-RELATED"/>
    <property type="match status" value="1"/>
</dbReference>
<dbReference type="Pfam" id="PF01180">
    <property type="entry name" value="DHO_dh"/>
    <property type="match status" value="1"/>
</dbReference>
<dbReference type="PIRSF" id="PIRSF000164">
    <property type="entry name" value="DHO_oxidase"/>
    <property type="match status" value="1"/>
</dbReference>
<dbReference type="SUPFAM" id="SSF51395">
    <property type="entry name" value="FMN-linked oxidoreductases"/>
    <property type="match status" value="1"/>
</dbReference>
<dbReference type="PROSITE" id="PS00911">
    <property type="entry name" value="DHODEHASE_1"/>
    <property type="match status" value="1"/>
</dbReference>
<dbReference type="PROSITE" id="PS00912">
    <property type="entry name" value="DHODEHASE_2"/>
    <property type="match status" value="1"/>
</dbReference>
<keyword id="KW-0963">Cytoplasm</keyword>
<keyword id="KW-0285">Flavoprotein</keyword>
<keyword id="KW-0288">FMN</keyword>
<keyword id="KW-0520">NAD</keyword>
<keyword id="KW-0560">Oxidoreductase</keyword>
<keyword id="KW-0665">Pyrimidine biosynthesis</keyword>
<keyword id="KW-1185">Reference proteome</keyword>
<accession>A5G3H0</accession>